<proteinExistence type="evidence at transcript level"/>
<evidence type="ECO:0000250" key="1"/>
<evidence type="ECO:0000250" key="2">
    <source>
        <dbReference type="UniProtKB" id="P08758"/>
    </source>
</evidence>
<evidence type="ECO:0000250" key="3">
    <source>
        <dbReference type="UniProtKB" id="P48036"/>
    </source>
</evidence>
<evidence type="ECO:0000250" key="4">
    <source>
        <dbReference type="UniProtKB" id="P81287"/>
    </source>
</evidence>
<evidence type="ECO:0000255" key="5">
    <source>
        <dbReference type="PROSITE-ProRule" id="PRU01245"/>
    </source>
</evidence>
<evidence type="ECO:0000305" key="6"/>
<feature type="initiator methionine" description="Removed" evidence="4">
    <location>
        <position position="1"/>
    </location>
</feature>
<feature type="chain" id="PRO_0000067489" description="Annexin A5">
    <location>
        <begin position="2"/>
        <end position="320"/>
    </location>
</feature>
<feature type="repeat" description="Annexin 1" evidence="5">
    <location>
        <begin position="15"/>
        <end position="86"/>
    </location>
</feature>
<feature type="repeat" description="Annexin 2" evidence="5">
    <location>
        <begin position="87"/>
        <end position="158"/>
    </location>
</feature>
<feature type="repeat" description="Annexin 3" evidence="5">
    <location>
        <begin position="170"/>
        <end position="242"/>
    </location>
</feature>
<feature type="repeat" description="Annexin 4" evidence="5">
    <location>
        <begin position="246"/>
        <end position="317"/>
    </location>
</feature>
<feature type="short sequence motif" description="[IL]-x-C-x-x-[DE] motif" evidence="2">
    <location>
        <begin position="314"/>
        <end position="319"/>
    </location>
</feature>
<feature type="modified residue" description="N-acetylalanine" evidence="4">
    <location>
        <position position="2"/>
    </location>
</feature>
<feature type="modified residue" description="Phosphoserine" evidence="3">
    <location>
        <position position="37"/>
    </location>
</feature>
<feature type="modified residue" description="N6-acetyllysine" evidence="2">
    <location>
        <position position="70"/>
    </location>
</feature>
<feature type="modified residue" description="N6-acetyllysine" evidence="2">
    <location>
        <position position="76"/>
    </location>
</feature>
<feature type="modified residue" description="N6-acetyllysine" evidence="2">
    <location>
        <position position="79"/>
    </location>
</feature>
<feature type="modified residue" description="N6-acetyllysine" evidence="2">
    <location>
        <position position="97"/>
    </location>
</feature>
<feature type="modified residue" description="N6-acetyllysine" evidence="2">
    <location>
        <position position="101"/>
    </location>
</feature>
<feature type="modified residue" description="N6-succinyllysine" evidence="3">
    <location>
        <position position="290"/>
    </location>
</feature>
<feature type="cross-link" description="Glycyl lysine isopeptide (Lys-Gly) (interchain with G-Cter in SUMO1); alternate" evidence="2">
    <location>
        <position position="29"/>
    </location>
</feature>
<feature type="cross-link" description="Glycyl lysine isopeptide (Lys-Gly) (interchain with G-Cter in SUMO2); alternate" evidence="2">
    <location>
        <position position="29"/>
    </location>
</feature>
<gene>
    <name type="primary">ANXA5</name>
</gene>
<comment type="function">
    <text evidence="1">This protein is an anticoagulant protein that acts as an indirect inhibitor of the thromboplastin-specific complex, which is involved in the blood coagulation cascade.</text>
</comment>
<comment type="subunit">
    <text evidence="1">Monomer. Binds ATRX and EIF5B (By similarity).</text>
</comment>
<comment type="domain">
    <text>A pair of annexin repeats may form one binding site for calcium and phospholipid.</text>
</comment>
<comment type="domain">
    <text evidence="2">The [IL]-x-C-x-x-[DE] motif is a proposed target motif for cysteine S-nitrosylation mediated by the iNOS-S100A8/A9 transnitrosylase complex.</text>
</comment>
<comment type="PTM">
    <text evidence="2">S-nitrosylation is induced by interferon-gamma and oxidatively-modified low-densitity lipoprotein (LDL(ox)) possibly implicating the iNOS-S100A8/9 transnitrosylase complex.</text>
</comment>
<comment type="similarity">
    <text evidence="5 6">Belongs to the annexin family.</text>
</comment>
<organism>
    <name type="scientific">Pan troglodytes</name>
    <name type="common">Chimpanzee</name>
    <dbReference type="NCBI Taxonomy" id="9598"/>
    <lineage>
        <taxon>Eukaryota</taxon>
        <taxon>Metazoa</taxon>
        <taxon>Chordata</taxon>
        <taxon>Craniata</taxon>
        <taxon>Vertebrata</taxon>
        <taxon>Euteleostomi</taxon>
        <taxon>Mammalia</taxon>
        <taxon>Eutheria</taxon>
        <taxon>Euarchontoglires</taxon>
        <taxon>Primates</taxon>
        <taxon>Haplorrhini</taxon>
        <taxon>Catarrhini</taxon>
        <taxon>Hominidae</taxon>
        <taxon>Pan</taxon>
    </lineage>
</organism>
<reference key="1">
    <citation type="submission" date="2004-08" db="EMBL/GenBank/DDBJ databases">
        <authorList>
            <person name="Hirai M."/>
            <person name="Sakate R."/>
            <person name="Hida M."/>
            <person name="Sugano S."/>
            <person name="Hayasaka I."/>
            <person name="Suto Y."/>
            <person name="Osada N."/>
            <person name="Hashimoto K."/>
        </authorList>
    </citation>
    <scope>NUCLEOTIDE SEQUENCE [MRNA]</scope>
    <source>
        <tissue>Skin</tissue>
    </source>
</reference>
<keyword id="KW-0007">Acetylation</keyword>
<keyword id="KW-0041">Annexin</keyword>
<keyword id="KW-0094">Blood coagulation</keyword>
<keyword id="KW-0106">Calcium</keyword>
<keyword id="KW-0111">Calcium/phospholipid-binding</keyword>
<keyword id="KW-0356">Hemostasis</keyword>
<keyword id="KW-1017">Isopeptide bond</keyword>
<keyword id="KW-0597">Phosphoprotein</keyword>
<keyword id="KW-1185">Reference proteome</keyword>
<keyword id="KW-0677">Repeat</keyword>
<keyword id="KW-0702">S-nitrosylation</keyword>
<keyword id="KW-0832">Ubl conjugation</keyword>
<dbReference type="EMBL" id="AB188287">
    <property type="protein sequence ID" value="BAD74038.1"/>
    <property type="molecule type" value="mRNA"/>
</dbReference>
<dbReference type="RefSeq" id="NP_001009099.1">
    <property type="nucleotide sequence ID" value="NM_001009099.1"/>
</dbReference>
<dbReference type="SMR" id="Q5R1W0"/>
<dbReference type="FunCoup" id="Q5R1W0">
    <property type="interactions" value="962"/>
</dbReference>
<dbReference type="STRING" id="9598.ENSPTRP00000028177"/>
<dbReference type="PaxDb" id="9598-ENSPTRP00000028177"/>
<dbReference type="Ensembl" id="ENSPTRT00000030511.3">
    <property type="protein sequence ID" value="ENSPTRP00000028177.2"/>
    <property type="gene ID" value="ENSPTRG00000016407.5"/>
</dbReference>
<dbReference type="GeneID" id="461466"/>
<dbReference type="KEGG" id="ptr:461466"/>
<dbReference type="CTD" id="308"/>
<dbReference type="VGNC" id="VGNC:565">
    <property type="gene designation" value="ANXA5"/>
</dbReference>
<dbReference type="eggNOG" id="KOG0819">
    <property type="taxonomic scope" value="Eukaryota"/>
</dbReference>
<dbReference type="GeneTree" id="ENSGT00940000155988"/>
<dbReference type="HOGENOM" id="CLU_025300_0_0_1"/>
<dbReference type="InParanoid" id="Q5R1W0"/>
<dbReference type="OrthoDB" id="3202at9604"/>
<dbReference type="TreeFam" id="TF105452"/>
<dbReference type="Proteomes" id="UP000002277">
    <property type="component" value="Chromosome 4"/>
</dbReference>
<dbReference type="Bgee" id="ENSPTRG00000016407">
    <property type="expression patterns" value="Expressed in fibroblast and 21 other cell types or tissues"/>
</dbReference>
<dbReference type="GO" id="GO:0005737">
    <property type="term" value="C:cytoplasm"/>
    <property type="evidence" value="ECO:0000318"/>
    <property type="project" value="GO_Central"/>
</dbReference>
<dbReference type="GO" id="GO:0072563">
    <property type="term" value="C:endothelial microparticle"/>
    <property type="evidence" value="ECO:0007669"/>
    <property type="project" value="Ensembl"/>
</dbReference>
<dbReference type="GO" id="GO:0009897">
    <property type="term" value="C:external side of plasma membrane"/>
    <property type="evidence" value="ECO:0007669"/>
    <property type="project" value="Ensembl"/>
</dbReference>
<dbReference type="GO" id="GO:0042383">
    <property type="term" value="C:sarcolemma"/>
    <property type="evidence" value="ECO:0000318"/>
    <property type="project" value="GO_Central"/>
</dbReference>
<dbReference type="GO" id="GO:0012506">
    <property type="term" value="C:vesicle membrane"/>
    <property type="evidence" value="ECO:0000318"/>
    <property type="project" value="GO_Central"/>
</dbReference>
<dbReference type="GO" id="GO:0005509">
    <property type="term" value="F:calcium ion binding"/>
    <property type="evidence" value="ECO:0007669"/>
    <property type="project" value="InterPro"/>
</dbReference>
<dbReference type="GO" id="GO:0005544">
    <property type="term" value="F:calcium-dependent phospholipid binding"/>
    <property type="evidence" value="ECO:0000318"/>
    <property type="project" value="GO_Central"/>
</dbReference>
<dbReference type="GO" id="GO:0001786">
    <property type="term" value="F:phosphatidylserine binding"/>
    <property type="evidence" value="ECO:0000318"/>
    <property type="project" value="GO_Central"/>
</dbReference>
<dbReference type="GO" id="GO:0007596">
    <property type="term" value="P:blood coagulation"/>
    <property type="evidence" value="ECO:0007669"/>
    <property type="project" value="UniProtKB-KW"/>
</dbReference>
<dbReference type="GO" id="GO:0050819">
    <property type="term" value="P:negative regulation of coagulation"/>
    <property type="evidence" value="ECO:0007669"/>
    <property type="project" value="InterPro"/>
</dbReference>
<dbReference type="FunFam" id="1.10.220.10:FF:000002">
    <property type="entry name" value="Annexin"/>
    <property type="match status" value="1"/>
</dbReference>
<dbReference type="FunFam" id="1.10.220.10:FF:000003">
    <property type="entry name" value="Annexin"/>
    <property type="match status" value="1"/>
</dbReference>
<dbReference type="FunFam" id="1.10.220.10:FF:000004">
    <property type="entry name" value="Annexin"/>
    <property type="match status" value="1"/>
</dbReference>
<dbReference type="FunFam" id="1.10.220.10:FF:000022">
    <property type="entry name" value="Annexin A5"/>
    <property type="match status" value="1"/>
</dbReference>
<dbReference type="Gene3D" id="1.10.220.10">
    <property type="entry name" value="Annexin"/>
    <property type="match status" value="4"/>
</dbReference>
<dbReference type="InterPro" id="IPR001464">
    <property type="entry name" value="Annexin"/>
</dbReference>
<dbReference type="InterPro" id="IPR018502">
    <property type="entry name" value="Annexin_repeat"/>
</dbReference>
<dbReference type="InterPro" id="IPR018252">
    <property type="entry name" value="Annexin_repeat_CS"/>
</dbReference>
<dbReference type="InterPro" id="IPR037104">
    <property type="entry name" value="Annexin_sf"/>
</dbReference>
<dbReference type="InterPro" id="IPR002392">
    <property type="entry name" value="ANX5"/>
</dbReference>
<dbReference type="PANTHER" id="PTHR10502">
    <property type="entry name" value="ANNEXIN"/>
    <property type="match status" value="1"/>
</dbReference>
<dbReference type="PANTHER" id="PTHR10502:SF26">
    <property type="entry name" value="ANNEXIN A5"/>
    <property type="match status" value="1"/>
</dbReference>
<dbReference type="Pfam" id="PF00191">
    <property type="entry name" value="Annexin"/>
    <property type="match status" value="4"/>
</dbReference>
<dbReference type="PRINTS" id="PR00196">
    <property type="entry name" value="ANNEXIN"/>
</dbReference>
<dbReference type="PRINTS" id="PR00201">
    <property type="entry name" value="ANNEXINV"/>
</dbReference>
<dbReference type="SMART" id="SM00335">
    <property type="entry name" value="ANX"/>
    <property type="match status" value="4"/>
</dbReference>
<dbReference type="SUPFAM" id="SSF47874">
    <property type="entry name" value="Annexin"/>
    <property type="match status" value="1"/>
</dbReference>
<dbReference type="PROSITE" id="PS00223">
    <property type="entry name" value="ANNEXIN_1"/>
    <property type="match status" value="4"/>
</dbReference>
<dbReference type="PROSITE" id="PS51897">
    <property type="entry name" value="ANNEXIN_2"/>
    <property type="match status" value="4"/>
</dbReference>
<name>ANXA5_PANTR</name>
<accession>Q5R1W0</accession>
<protein>
    <recommendedName>
        <fullName>Annexin A5</fullName>
    </recommendedName>
    <alternativeName>
        <fullName>Annexin V</fullName>
    </alternativeName>
    <alternativeName>
        <fullName>Annexin-5</fullName>
    </alternativeName>
</protein>
<sequence length="320" mass="35937">MAQVLRGTVTDFPGFDERADAETLRKAMKGLGTDEESILTLLTSRSNAQRQEISAAFKTLFGRDLLDDLKSELTGKFEKLIVALMKPSRLYDAYELKHALKGAGTNEKVLTEIIASRTPEELRAIKQVYEEEYGSSLEDDVVGDTSGYYQRMLVVLLQANRDPDAGIDEAQVEQDAQALFQAGELKWGTDEEKFITIFGTRSVSHLRKVFDKYMTISGFQIEETIDRETSGNLEQLLLAVVKSIRSIPAYLAETLYYAMKGAGTDDHTLIRVMVSRSEIDLFNIRKEFRKNFATSLYSMIKGDTSGDYKKALLLLCGEDD</sequence>